<accession>B0VEA3</accession>
<name>PNP_ACIBY</name>
<feature type="chain" id="PRO_1000147875" description="Polyribonucleotide nucleotidyltransferase">
    <location>
        <begin position="1"/>
        <end position="697"/>
    </location>
</feature>
<feature type="domain" description="KH" evidence="1">
    <location>
        <begin position="555"/>
        <end position="614"/>
    </location>
</feature>
<feature type="domain" description="S1 motif" evidence="1">
    <location>
        <begin position="624"/>
        <end position="692"/>
    </location>
</feature>
<feature type="binding site" evidence="1">
    <location>
        <position position="488"/>
    </location>
    <ligand>
        <name>Mg(2+)</name>
        <dbReference type="ChEBI" id="CHEBI:18420"/>
    </ligand>
</feature>
<feature type="binding site" evidence="1">
    <location>
        <position position="494"/>
    </location>
    <ligand>
        <name>Mg(2+)</name>
        <dbReference type="ChEBI" id="CHEBI:18420"/>
    </ligand>
</feature>
<sequence>MSMFNIVRKEFQFGQHQVVLETGRVARQANTVLITMGGVTVLVAVVAAPTAKAGQDFFPLTVNYQEKQYAAGRIPGGYGKREGRASEAETLISRLIDRPIRPLFPEGYYNEIQVTATVVSSDKTMEADIAAMLGTSAALAIAGTPFRGPIGAARVGLINGEYVLNPNFEQMAQSDLDLVVAGTESAVLMVESEAKELSEDQMLGAVLFGHDEMQIAIQAINEFAAAAGAKPSDWVAPAHNEELRAKLKEAFEAKISEAYTIAVKQDRYAALDALHAEAVAQFVPEEDVDGIADEVDYLFEDLKYRTVRDNILSGKPRIDGRDTKTVRALDVQVGVLERAHGSALFTRGETQALVTTTLGNTRDALMVDTLAGTKTDNFMLHYNFPAYSVGETGRESGPKRREIGHGRLARRGVQAVLPAADRFPYVIRIVSDITESNGSSSMASVCGASLSLMDAGVPLKAPVAGIAMGLVKEGERFAVLSDILGDEDHLGDMDFKVAGSANGITALQMDIKIEGITEEIMEVALNQAFAGRMHILNEMNKVISRARPEISMHAPTFEVITINPDKIRDVIGKGGATIRQITEETKAAIDIEDNGTVRVFGETKAAAKAAIAKIQAITAEVEPGKIYDGKVIRIVEFGAFVNIMPGTDGLLHISQISNERIANVTDVLKEGQEVKVQVQDVDNRGRIKLTMKDIEQA</sequence>
<comment type="function">
    <text evidence="1">Involved in mRNA degradation. Catalyzes the phosphorolysis of single-stranded polyribonucleotides processively in the 3'- to 5'-direction.</text>
</comment>
<comment type="catalytic activity">
    <reaction evidence="1">
        <text>RNA(n+1) + phosphate = RNA(n) + a ribonucleoside 5'-diphosphate</text>
        <dbReference type="Rhea" id="RHEA:22096"/>
        <dbReference type="Rhea" id="RHEA-COMP:14527"/>
        <dbReference type="Rhea" id="RHEA-COMP:17342"/>
        <dbReference type="ChEBI" id="CHEBI:43474"/>
        <dbReference type="ChEBI" id="CHEBI:57930"/>
        <dbReference type="ChEBI" id="CHEBI:140395"/>
        <dbReference type="EC" id="2.7.7.8"/>
    </reaction>
</comment>
<comment type="cofactor">
    <cofactor evidence="1">
        <name>Mg(2+)</name>
        <dbReference type="ChEBI" id="CHEBI:18420"/>
    </cofactor>
</comment>
<comment type="subunit">
    <text evidence="1">Component of the RNA degradosome, which is a multiprotein complex involved in RNA processing and mRNA degradation.</text>
</comment>
<comment type="subcellular location">
    <subcellularLocation>
        <location evidence="1">Cytoplasm</location>
    </subcellularLocation>
</comment>
<comment type="similarity">
    <text evidence="1">Belongs to the polyribonucleotide nucleotidyltransferase family.</text>
</comment>
<keyword id="KW-0963">Cytoplasm</keyword>
<keyword id="KW-0460">Magnesium</keyword>
<keyword id="KW-0479">Metal-binding</keyword>
<keyword id="KW-0548">Nucleotidyltransferase</keyword>
<keyword id="KW-0694">RNA-binding</keyword>
<keyword id="KW-0808">Transferase</keyword>
<proteinExistence type="inferred from homology"/>
<reference key="1">
    <citation type="journal article" date="2008" name="PLoS ONE">
        <title>Comparative analysis of Acinetobacters: three genomes for three lifestyles.</title>
        <authorList>
            <person name="Vallenet D."/>
            <person name="Nordmann P."/>
            <person name="Barbe V."/>
            <person name="Poirel L."/>
            <person name="Mangenot S."/>
            <person name="Bataille E."/>
            <person name="Dossat C."/>
            <person name="Gas S."/>
            <person name="Kreimeyer A."/>
            <person name="Lenoble P."/>
            <person name="Oztas S."/>
            <person name="Poulain J."/>
            <person name="Segurens B."/>
            <person name="Robert C."/>
            <person name="Abergel C."/>
            <person name="Claverie J.-M."/>
            <person name="Raoult D."/>
            <person name="Medigue C."/>
            <person name="Weissenbach J."/>
            <person name="Cruveiller S."/>
        </authorList>
    </citation>
    <scope>NUCLEOTIDE SEQUENCE [LARGE SCALE GENOMIC DNA]</scope>
    <source>
        <strain>AYE</strain>
    </source>
</reference>
<dbReference type="EC" id="2.7.7.8" evidence="1"/>
<dbReference type="EMBL" id="CU459141">
    <property type="protein sequence ID" value="CAM88208.1"/>
    <property type="molecule type" value="Genomic_DNA"/>
</dbReference>
<dbReference type="SMR" id="B0VEA3"/>
<dbReference type="EnsemblBacteria" id="CAM88208">
    <property type="protein sequence ID" value="CAM88208"/>
    <property type="gene ID" value="ABAYE3414"/>
</dbReference>
<dbReference type="KEGG" id="aby:ABAYE3414"/>
<dbReference type="HOGENOM" id="CLU_004217_2_2_6"/>
<dbReference type="GO" id="GO:0005829">
    <property type="term" value="C:cytosol"/>
    <property type="evidence" value="ECO:0007669"/>
    <property type="project" value="TreeGrafter"/>
</dbReference>
<dbReference type="GO" id="GO:0000175">
    <property type="term" value="F:3'-5'-RNA exonuclease activity"/>
    <property type="evidence" value="ECO:0007669"/>
    <property type="project" value="TreeGrafter"/>
</dbReference>
<dbReference type="GO" id="GO:0000287">
    <property type="term" value="F:magnesium ion binding"/>
    <property type="evidence" value="ECO:0007669"/>
    <property type="project" value="UniProtKB-UniRule"/>
</dbReference>
<dbReference type="GO" id="GO:0004654">
    <property type="term" value="F:polyribonucleotide nucleotidyltransferase activity"/>
    <property type="evidence" value="ECO:0007669"/>
    <property type="project" value="UniProtKB-UniRule"/>
</dbReference>
<dbReference type="GO" id="GO:0003723">
    <property type="term" value="F:RNA binding"/>
    <property type="evidence" value="ECO:0007669"/>
    <property type="project" value="UniProtKB-UniRule"/>
</dbReference>
<dbReference type="GO" id="GO:0006402">
    <property type="term" value="P:mRNA catabolic process"/>
    <property type="evidence" value="ECO:0007669"/>
    <property type="project" value="UniProtKB-UniRule"/>
</dbReference>
<dbReference type="GO" id="GO:0006396">
    <property type="term" value="P:RNA processing"/>
    <property type="evidence" value="ECO:0007669"/>
    <property type="project" value="InterPro"/>
</dbReference>
<dbReference type="CDD" id="cd02393">
    <property type="entry name" value="KH-I_PNPase"/>
    <property type="match status" value="1"/>
</dbReference>
<dbReference type="CDD" id="cd11363">
    <property type="entry name" value="RNase_PH_PNPase_1"/>
    <property type="match status" value="1"/>
</dbReference>
<dbReference type="CDD" id="cd11364">
    <property type="entry name" value="RNase_PH_PNPase_2"/>
    <property type="match status" value="1"/>
</dbReference>
<dbReference type="CDD" id="cd04472">
    <property type="entry name" value="S1_PNPase"/>
    <property type="match status" value="1"/>
</dbReference>
<dbReference type="FunFam" id="2.40.50.140:FF:000023">
    <property type="entry name" value="Polyribonucleotide nucleotidyltransferase"/>
    <property type="match status" value="1"/>
</dbReference>
<dbReference type="FunFam" id="3.30.1370.10:FF:000001">
    <property type="entry name" value="Polyribonucleotide nucleotidyltransferase"/>
    <property type="match status" value="1"/>
</dbReference>
<dbReference type="FunFam" id="3.30.230.70:FF:000001">
    <property type="entry name" value="Polyribonucleotide nucleotidyltransferase"/>
    <property type="match status" value="1"/>
</dbReference>
<dbReference type="FunFam" id="3.30.230.70:FF:000002">
    <property type="entry name" value="Polyribonucleotide nucleotidyltransferase"/>
    <property type="match status" value="1"/>
</dbReference>
<dbReference type="Gene3D" id="3.30.230.70">
    <property type="entry name" value="GHMP Kinase, N-terminal domain"/>
    <property type="match status" value="2"/>
</dbReference>
<dbReference type="Gene3D" id="3.30.1370.10">
    <property type="entry name" value="K Homology domain, type 1"/>
    <property type="match status" value="1"/>
</dbReference>
<dbReference type="Gene3D" id="2.40.50.140">
    <property type="entry name" value="Nucleic acid-binding proteins"/>
    <property type="match status" value="1"/>
</dbReference>
<dbReference type="HAMAP" id="MF_01595">
    <property type="entry name" value="PNPase"/>
    <property type="match status" value="1"/>
</dbReference>
<dbReference type="InterPro" id="IPR001247">
    <property type="entry name" value="ExoRNase_PH_dom1"/>
</dbReference>
<dbReference type="InterPro" id="IPR015847">
    <property type="entry name" value="ExoRNase_PH_dom2"/>
</dbReference>
<dbReference type="InterPro" id="IPR036345">
    <property type="entry name" value="ExoRNase_PH_dom2_sf"/>
</dbReference>
<dbReference type="InterPro" id="IPR004087">
    <property type="entry name" value="KH_dom"/>
</dbReference>
<dbReference type="InterPro" id="IPR004088">
    <property type="entry name" value="KH_dom_type_1"/>
</dbReference>
<dbReference type="InterPro" id="IPR036612">
    <property type="entry name" value="KH_dom_type_1_sf"/>
</dbReference>
<dbReference type="InterPro" id="IPR012340">
    <property type="entry name" value="NA-bd_OB-fold"/>
</dbReference>
<dbReference type="InterPro" id="IPR012162">
    <property type="entry name" value="PNPase"/>
</dbReference>
<dbReference type="InterPro" id="IPR027408">
    <property type="entry name" value="PNPase/RNase_PH_dom_sf"/>
</dbReference>
<dbReference type="InterPro" id="IPR015848">
    <property type="entry name" value="PNPase_PH_RNA-bd_bac/org-type"/>
</dbReference>
<dbReference type="InterPro" id="IPR036456">
    <property type="entry name" value="PNPase_PH_RNA-bd_sf"/>
</dbReference>
<dbReference type="InterPro" id="IPR020568">
    <property type="entry name" value="Ribosomal_Su5_D2-typ_SF"/>
</dbReference>
<dbReference type="InterPro" id="IPR003029">
    <property type="entry name" value="S1_domain"/>
</dbReference>
<dbReference type="NCBIfam" id="TIGR03591">
    <property type="entry name" value="polynuc_phos"/>
    <property type="match status" value="1"/>
</dbReference>
<dbReference type="NCBIfam" id="NF008805">
    <property type="entry name" value="PRK11824.1"/>
    <property type="match status" value="1"/>
</dbReference>
<dbReference type="PANTHER" id="PTHR11252">
    <property type="entry name" value="POLYRIBONUCLEOTIDE NUCLEOTIDYLTRANSFERASE"/>
    <property type="match status" value="1"/>
</dbReference>
<dbReference type="PANTHER" id="PTHR11252:SF0">
    <property type="entry name" value="POLYRIBONUCLEOTIDE NUCLEOTIDYLTRANSFERASE 1, MITOCHONDRIAL"/>
    <property type="match status" value="1"/>
</dbReference>
<dbReference type="Pfam" id="PF00013">
    <property type="entry name" value="KH_1"/>
    <property type="match status" value="1"/>
</dbReference>
<dbReference type="Pfam" id="PF03726">
    <property type="entry name" value="PNPase"/>
    <property type="match status" value="1"/>
</dbReference>
<dbReference type="Pfam" id="PF01138">
    <property type="entry name" value="RNase_PH"/>
    <property type="match status" value="2"/>
</dbReference>
<dbReference type="Pfam" id="PF03725">
    <property type="entry name" value="RNase_PH_C"/>
    <property type="match status" value="2"/>
</dbReference>
<dbReference type="Pfam" id="PF00575">
    <property type="entry name" value="S1"/>
    <property type="match status" value="1"/>
</dbReference>
<dbReference type="PIRSF" id="PIRSF005499">
    <property type="entry name" value="PNPase"/>
    <property type="match status" value="1"/>
</dbReference>
<dbReference type="SMART" id="SM00322">
    <property type="entry name" value="KH"/>
    <property type="match status" value="1"/>
</dbReference>
<dbReference type="SMART" id="SM00316">
    <property type="entry name" value="S1"/>
    <property type="match status" value="1"/>
</dbReference>
<dbReference type="SUPFAM" id="SSF54791">
    <property type="entry name" value="Eukaryotic type KH-domain (KH-domain type I)"/>
    <property type="match status" value="1"/>
</dbReference>
<dbReference type="SUPFAM" id="SSF50249">
    <property type="entry name" value="Nucleic acid-binding proteins"/>
    <property type="match status" value="1"/>
</dbReference>
<dbReference type="SUPFAM" id="SSF46915">
    <property type="entry name" value="Polynucleotide phosphorylase/guanosine pentaphosphate synthase (PNPase/GPSI), domain 3"/>
    <property type="match status" value="1"/>
</dbReference>
<dbReference type="SUPFAM" id="SSF55666">
    <property type="entry name" value="Ribonuclease PH domain 2-like"/>
    <property type="match status" value="2"/>
</dbReference>
<dbReference type="SUPFAM" id="SSF54211">
    <property type="entry name" value="Ribosomal protein S5 domain 2-like"/>
    <property type="match status" value="2"/>
</dbReference>
<dbReference type="PROSITE" id="PS50084">
    <property type="entry name" value="KH_TYPE_1"/>
    <property type="match status" value="1"/>
</dbReference>
<dbReference type="PROSITE" id="PS50126">
    <property type="entry name" value="S1"/>
    <property type="match status" value="1"/>
</dbReference>
<organism>
    <name type="scientific">Acinetobacter baumannii (strain AYE)</name>
    <dbReference type="NCBI Taxonomy" id="509173"/>
    <lineage>
        <taxon>Bacteria</taxon>
        <taxon>Pseudomonadati</taxon>
        <taxon>Pseudomonadota</taxon>
        <taxon>Gammaproteobacteria</taxon>
        <taxon>Moraxellales</taxon>
        <taxon>Moraxellaceae</taxon>
        <taxon>Acinetobacter</taxon>
        <taxon>Acinetobacter calcoaceticus/baumannii complex</taxon>
    </lineage>
</organism>
<gene>
    <name evidence="1" type="primary">pnp</name>
    <name type="ordered locus">ABAYE3414</name>
</gene>
<protein>
    <recommendedName>
        <fullName evidence="1">Polyribonucleotide nucleotidyltransferase</fullName>
        <ecNumber evidence="1">2.7.7.8</ecNumber>
    </recommendedName>
    <alternativeName>
        <fullName evidence="1">Polynucleotide phosphorylase</fullName>
        <shortName evidence="1">PNPase</shortName>
    </alternativeName>
</protein>
<evidence type="ECO:0000255" key="1">
    <source>
        <dbReference type="HAMAP-Rule" id="MF_01595"/>
    </source>
</evidence>